<dbReference type="EC" id="2.7.2.3" evidence="1"/>
<dbReference type="EMBL" id="CP000605">
    <property type="protein sequence ID" value="ACD97878.1"/>
    <property type="molecule type" value="Genomic_DNA"/>
</dbReference>
<dbReference type="RefSeq" id="WP_007056699.1">
    <property type="nucleotide sequence ID" value="NZ_AABM02000001.1"/>
</dbReference>
<dbReference type="SMR" id="B3DRV9"/>
<dbReference type="KEGG" id="blj:BLD_0432"/>
<dbReference type="HOGENOM" id="CLU_025427_0_2_11"/>
<dbReference type="UniPathway" id="UPA00109">
    <property type="reaction ID" value="UER00185"/>
</dbReference>
<dbReference type="Proteomes" id="UP000002419">
    <property type="component" value="Chromosome"/>
</dbReference>
<dbReference type="GO" id="GO:0005829">
    <property type="term" value="C:cytosol"/>
    <property type="evidence" value="ECO:0007669"/>
    <property type="project" value="TreeGrafter"/>
</dbReference>
<dbReference type="GO" id="GO:0043531">
    <property type="term" value="F:ADP binding"/>
    <property type="evidence" value="ECO:0007669"/>
    <property type="project" value="TreeGrafter"/>
</dbReference>
<dbReference type="GO" id="GO:0005524">
    <property type="term" value="F:ATP binding"/>
    <property type="evidence" value="ECO:0007669"/>
    <property type="project" value="UniProtKB-KW"/>
</dbReference>
<dbReference type="GO" id="GO:0004618">
    <property type="term" value="F:phosphoglycerate kinase activity"/>
    <property type="evidence" value="ECO:0007669"/>
    <property type="project" value="UniProtKB-UniRule"/>
</dbReference>
<dbReference type="GO" id="GO:0006094">
    <property type="term" value="P:gluconeogenesis"/>
    <property type="evidence" value="ECO:0007669"/>
    <property type="project" value="TreeGrafter"/>
</dbReference>
<dbReference type="GO" id="GO:0006096">
    <property type="term" value="P:glycolytic process"/>
    <property type="evidence" value="ECO:0007669"/>
    <property type="project" value="UniProtKB-UniRule"/>
</dbReference>
<dbReference type="CDD" id="cd00318">
    <property type="entry name" value="Phosphoglycerate_kinase"/>
    <property type="match status" value="1"/>
</dbReference>
<dbReference type="FunFam" id="3.40.50.1260:FF:000003">
    <property type="entry name" value="Phosphoglycerate kinase"/>
    <property type="match status" value="1"/>
</dbReference>
<dbReference type="FunFam" id="3.40.50.1260:FF:000006">
    <property type="entry name" value="Phosphoglycerate kinase"/>
    <property type="match status" value="1"/>
</dbReference>
<dbReference type="Gene3D" id="3.40.50.1260">
    <property type="entry name" value="Phosphoglycerate kinase, N-terminal domain"/>
    <property type="match status" value="2"/>
</dbReference>
<dbReference type="HAMAP" id="MF_00145">
    <property type="entry name" value="Phosphoglyc_kinase"/>
    <property type="match status" value="1"/>
</dbReference>
<dbReference type="InterPro" id="IPR001576">
    <property type="entry name" value="Phosphoglycerate_kinase"/>
</dbReference>
<dbReference type="InterPro" id="IPR015911">
    <property type="entry name" value="Phosphoglycerate_kinase_CS"/>
</dbReference>
<dbReference type="InterPro" id="IPR015824">
    <property type="entry name" value="Phosphoglycerate_kinase_N"/>
</dbReference>
<dbReference type="InterPro" id="IPR036043">
    <property type="entry name" value="Phosphoglycerate_kinase_sf"/>
</dbReference>
<dbReference type="PANTHER" id="PTHR11406">
    <property type="entry name" value="PHOSPHOGLYCERATE KINASE"/>
    <property type="match status" value="1"/>
</dbReference>
<dbReference type="PANTHER" id="PTHR11406:SF23">
    <property type="entry name" value="PHOSPHOGLYCERATE KINASE 1, CHLOROPLASTIC-RELATED"/>
    <property type="match status" value="1"/>
</dbReference>
<dbReference type="Pfam" id="PF00162">
    <property type="entry name" value="PGK"/>
    <property type="match status" value="1"/>
</dbReference>
<dbReference type="PIRSF" id="PIRSF000724">
    <property type="entry name" value="Pgk"/>
    <property type="match status" value="1"/>
</dbReference>
<dbReference type="PRINTS" id="PR00477">
    <property type="entry name" value="PHGLYCKINASE"/>
</dbReference>
<dbReference type="SUPFAM" id="SSF53748">
    <property type="entry name" value="Phosphoglycerate kinase"/>
    <property type="match status" value="1"/>
</dbReference>
<dbReference type="PROSITE" id="PS00111">
    <property type="entry name" value="PGLYCERATE_KINASE"/>
    <property type="match status" value="1"/>
</dbReference>
<organism>
    <name type="scientific">Bifidobacterium longum (strain DJO10A)</name>
    <dbReference type="NCBI Taxonomy" id="205913"/>
    <lineage>
        <taxon>Bacteria</taxon>
        <taxon>Bacillati</taxon>
        <taxon>Actinomycetota</taxon>
        <taxon>Actinomycetes</taxon>
        <taxon>Bifidobacteriales</taxon>
        <taxon>Bifidobacteriaceae</taxon>
        <taxon>Bifidobacterium</taxon>
    </lineage>
</organism>
<name>PGK_BIFLD</name>
<evidence type="ECO:0000255" key="1">
    <source>
        <dbReference type="HAMAP-Rule" id="MF_00145"/>
    </source>
</evidence>
<proteinExistence type="inferred from homology"/>
<accession>B3DRV9</accession>
<comment type="catalytic activity">
    <reaction evidence="1">
        <text>(2R)-3-phosphoglycerate + ATP = (2R)-3-phospho-glyceroyl phosphate + ADP</text>
        <dbReference type="Rhea" id="RHEA:14801"/>
        <dbReference type="ChEBI" id="CHEBI:30616"/>
        <dbReference type="ChEBI" id="CHEBI:57604"/>
        <dbReference type="ChEBI" id="CHEBI:58272"/>
        <dbReference type="ChEBI" id="CHEBI:456216"/>
        <dbReference type="EC" id="2.7.2.3"/>
    </reaction>
</comment>
<comment type="pathway">
    <text evidence="1">Carbohydrate degradation; glycolysis; pyruvate from D-glyceraldehyde 3-phosphate: step 2/5.</text>
</comment>
<comment type="subunit">
    <text evidence="1">Monomer.</text>
</comment>
<comment type="subcellular location">
    <subcellularLocation>
        <location evidence="1">Cytoplasm</location>
    </subcellularLocation>
</comment>
<comment type="similarity">
    <text evidence="1">Belongs to the phosphoglycerate kinase family.</text>
</comment>
<gene>
    <name evidence="1" type="primary">pgk</name>
    <name type="ordered locus">BLD_0432</name>
</gene>
<feature type="chain" id="PRO_1000096322" description="Phosphoglycerate kinase">
    <location>
        <begin position="1"/>
        <end position="401"/>
    </location>
</feature>
<feature type="binding site" evidence="1">
    <location>
        <begin position="20"/>
        <end position="22"/>
    </location>
    <ligand>
        <name>substrate</name>
    </ligand>
</feature>
<feature type="binding site" evidence="1">
    <location>
        <position position="35"/>
    </location>
    <ligand>
        <name>substrate</name>
    </ligand>
</feature>
<feature type="binding site" evidence="1">
    <location>
        <begin position="58"/>
        <end position="61"/>
    </location>
    <ligand>
        <name>substrate</name>
    </ligand>
</feature>
<feature type="binding site" evidence="1">
    <location>
        <position position="117"/>
    </location>
    <ligand>
        <name>substrate</name>
    </ligand>
</feature>
<feature type="binding site" evidence="1">
    <location>
        <position position="154"/>
    </location>
    <ligand>
        <name>substrate</name>
    </ligand>
</feature>
<feature type="binding site" evidence="1">
    <location>
        <position position="204"/>
    </location>
    <ligand>
        <name>ATP</name>
        <dbReference type="ChEBI" id="CHEBI:30616"/>
    </ligand>
</feature>
<feature type="binding site" evidence="1">
    <location>
        <position position="298"/>
    </location>
    <ligand>
        <name>ATP</name>
        <dbReference type="ChEBI" id="CHEBI:30616"/>
    </ligand>
</feature>
<feature type="binding site" evidence="1">
    <location>
        <position position="329"/>
    </location>
    <ligand>
        <name>ATP</name>
        <dbReference type="ChEBI" id="CHEBI:30616"/>
    </ligand>
</feature>
<feature type="binding site" evidence="1">
    <location>
        <begin position="358"/>
        <end position="361"/>
    </location>
    <ligand>
        <name>ATP</name>
        <dbReference type="ChEBI" id="CHEBI:30616"/>
    </ligand>
</feature>
<sequence length="401" mass="41866">MKTLKDLGDLKGKRVLVRADFNVPLDGTTITDDGRIKAALPTIKTLREEGAKVILMAHLGRPKGKVVPELSLAPVAARLGELLGANVPLAKDTYGEDAQAKVAAMNDGDVVLLENVRFNPEETSKDADERAAYAKKIAALGEAFVSDGFGVVHRAQGSNYDVAADLPAAAGLLVEKEVKALSKATENPERPFTVVLGGSKVSDKLGVIENLLDKANRLVIGGGMVFTFLKAKGYEVGTSLLEEDQLEKVKGYIETAEKNGVELVLPTDVVVNAGFPAGDTPVAPEVVAADAIPADKMGLDIGPESQKLFHDKIVDSKTVVWNGPMGVFEVPEFAAGTKAVAQGLVDATAAGAFTIVGGGDSASAVRNLGFPEDGFSHISTGGGASLEFLEGKELPGLKVLE</sequence>
<reference key="1">
    <citation type="journal article" date="2008" name="BMC Genomics">
        <title>Comparative genomic analysis of the gut bacterium Bifidobacterium longum reveals loci susceptible to deletion during pure culture growth.</title>
        <authorList>
            <person name="Lee J.H."/>
            <person name="Karamychev V.N."/>
            <person name="Kozyavkin S.A."/>
            <person name="Mills D."/>
            <person name="Pavlov A.R."/>
            <person name="Pavlova N.V."/>
            <person name="Polouchine N.N."/>
            <person name="Richardson P.M."/>
            <person name="Shakhova V.V."/>
            <person name="Slesarev A.I."/>
            <person name="Weimer B."/>
            <person name="O'Sullivan D.J."/>
        </authorList>
    </citation>
    <scope>NUCLEOTIDE SEQUENCE [LARGE SCALE GENOMIC DNA]</scope>
    <source>
        <strain>DJO10A</strain>
    </source>
</reference>
<keyword id="KW-0067">ATP-binding</keyword>
<keyword id="KW-0963">Cytoplasm</keyword>
<keyword id="KW-0324">Glycolysis</keyword>
<keyword id="KW-0418">Kinase</keyword>
<keyword id="KW-0547">Nucleotide-binding</keyword>
<keyword id="KW-0808">Transferase</keyword>
<protein>
    <recommendedName>
        <fullName evidence="1">Phosphoglycerate kinase</fullName>
        <ecNumber evidence="1">2.7.2.3</ecNumber>
    </recommendedName>
</protein>